<gene>
    <name type="primary">omcC</name>
    <name type="synonym">ferA</name>
    <name type="ordered locus">GSU2731</name>
</gene>
<keyword id="KW-0998">Cell outer membrane</keyword>
<keyword id="KW-0903">Direct protein sequencing</keyword>
<keyword id="KW-0249">Electron transport</keyword>
<keyword id="KW-0349">Heme</keyword>
<keyword id="KW-0408">Iron</keyword>
<keyword id="KW-0449">Lipoprotein</keyword>
<keyword id="KW-0472">Membrane</keyword>
<keyword id="KW-0479">Metal-binding</keyword>
<keyword id="KW-0564">Palmitate</keyword>
<keyword id="KW-1185">Reference proteome</keyword>
<keyword id="KW-0732">Signal</keyword>
<keyword id="KW-0813">Transport</keyword>
<comment type="function">
    <text evidence="3">Not involved in Fe(3+) reduction.</text>
</comment>
<comment type="subcellular location">
    <subcellularLocation>
        <location evidence="5">Cell outer membrane</location>
        <topology evidence="2">Lipid-anchor</topology>
    </subcellularLocation>
</comment>
<comment type="induction">
    <text evidence="4">Not regulated by Fe(3+).</text>
</comment>
<comment type="PTM">
    <text evidence="5">Binds 12 heme c groups per subunit.</text>
</comment>
<comment type="caution">
    <text evidence="6">Was initially thought to act as an electron-transport mediator in the dissimilatory reduction of Fe(3+).</text>
</comment>
<sequence>MSRKVTKYSAVLAVSLFAAALAGCGSENKEGTVGTGPGGVATVGDTACVQCHSAVVDPLTGESIITQYTRSFHYSKGVGCEGCHGGGAQHNGVGPLPFPLAGQSEAQIAARCASCHNGVIAPLSSSPNFVNGNHANPFGGEEAKENLCSRCHSHEGAIFGAQAGFTGDGNILRNAAYQPVYPQDPETFNVMTCATCHQHGGAQRQVFTQISTAGVPNSRRTVAWDPNRNSINDQYDLCTSCHTVNTMTGTLIGSGNVLQIFTSNAVGSGTKSVTTAPFYHNTRWFRTLPSTHYDFPESKTTASGTTIEGYVIRRNTANPCFDCHGHEFQTNTRRLAGADRPNTIFLDWGQSAHGGKLLQAKVAAAALASSGAAEVDDVMKAGATDATAPGWTHYNWDDTASRGACQRCHTSTGASNFLNNPAGYDRTGAGNSFTHLAGWTSSNKRSDQNELLYCWGCHTKAGTGELRNPGAITEVYPGINSTSTGTTGLDVTVSYPDIKGSNVCMGCHLGREVGDNIKAITDADGILGFVNSHYLTAGGQLFGTTGYEYATRSYANPAFFQHDKIGTAAAPGTGTNGPCAGCHMTTPTSHLFLPVTKDGTGAITAITSTACVTCHAGTFALTPEGLTAEEEEYVASLEALKAALAGKGILFFNAHPYFYRDTNANGIADPGETVSSNAFTNWAGVYGLALWQDVMGAAFNANLLIHDPGGYAHNRFYSKRLIWDSIDFIFDGVLNNDVTAAIDAQVTAARLDSATATAAKAYLGATRP</sequence>
<protein>
    <recommendedName>
        <fullName>C-type polyheme cytochrome OmcC</fullName>
    </recommendedName>
    <alternativeName>
        <fullName>Outer membrane c-type cytochrome C</fullName>
    </alternativeName>
    <alternativeName>
        <fullName>Polyheme membrane-associated cytochrome c</fullName>
    </alternativeName>
</protein>
<organism>
    <name type="scientific">Geobacter sulfurreducens (strain ATCC 51573 / DSM 12127 / PCA)</name>
    <dbReference type="NCBI Taxonomy" id="243231"/>
    <lineage>
        <taxon>Bacteria</taxon>
        <taxon>Pseudomonadati</taxon>
        <taxon>Thermodesulfobacteriota</taxon>
        <taxon>Desulfuromonadia</taxon>
        <taxon>Geobacterales</taxon>
        <taxon>Geobacteraceae</taxon>
        <taxon>Geobacter</taxon>
    </lineage>
</organism>
<dbReference type="EMBL" id="AE017180">
    <property type="protein sequence ID" value="AAR36103.1"/>
    <property type="molecule type" value="Genomic_DNA"/>
</dbReference>
<dbReference type="EMBL" id="AY033095">
    <property type="protein sequence ID" value="AAK53456.2"/>
    <property type="molecule type" value="Genomic_DNA"/>
</dbReference>
<dbReference type="RefSeq" id="NP_953776.1">
    <property type="nucleotide sequence ID" value="NC_002939.5"/>
</dbReference>
<dbReference type="RefSeq" id="WP_010943365.1">
    <property type="nucleotide sequence ID" value="NC_002939.5"/>
</dbReference>
<dbReference type="STRING" id="243231.GSU2731"/>
<dbReference type="TCDB" id="5.B.3.1.1">
    <property type="family name" value="the geobacter nanowire electron transfer (g-net) family"/>
</dbReference>
<dbReference type="EnsemblBacteria" id="AAR36103">
    <property type="protein sequence ID" value="AAR36103"/>
    <property type="gene ID" value="GSU2731"/>
</dbReference>
<dbReference type="KEGG" id="gsu:GSU2731"/>
<dbReference type="PATRIC" id="fig|243231.5.peg.2757"/>
<dbReference type="eggNOG" id="COG3005">
    <property type="taxonomic scope" value="Bacteria"/>
</dbReference>
<dbReference type="HOGENOM" id="CLU_355545_0_0_7"/>
<dbReference type="InParanoid" id="Q749L1"/>
<dbReference type="OrthoDB" id="5477228at2"/>
<dbReference type="Proteomes" id="UP000000577">
    <property type="component" value="Chromosome"/>
</dbReference>
<dbReference type="GO" id="GO:0009279">
    <property type="term" value="C:cell outer membrane"/>
    <property type="evidence" value="ECO:0007669"/>
    <property type="project" value="UniProtKB-SubCell"/>
</dbReference>
<dbReference type="GO" id="GO:0009055">
    <property type="term" value="F:electron transfer activity"/>
    <property type="evidence" value="ECO:0000314"/>
    <property type="project" value="TIGR"/>
</dbReference>
<dbReference type="GO" id="GO:0046872">
    <property type="term" value="F:metal ion binding"/>
    <property type="evidence" value="ECO:0007669"/>
    <property type="project" value="UniProtKB-KW"/>
</dbReference>
<dbReference type="GO" id="GO:0016491">
    <property type="term" value="F:oxidoreductase activity"/>
    <property type="evidence" value="ECO:0000318"/>
    <property type="project" value="GO_Central"/>
</dbReference>
<dbReference type="GO" id="GO:0019645">
    <property type="term" value="P:anaerobic electron transport chain"/>
    <property type="evidence" value="ECO:0000314"/>
    <property type="project" value="TIGR"/>
</dbReference>
<dbReference type="FunFam" id="1.10.1130.10:FF:000006">
    <property type="entry name" value="C-type polyheme cytochrome OmcB"/>
    <property type="match status" value="1"/>
</dbReference>
<dbReference type="Gene3D" id="1.10.1130.10">
    <property type="entry name" value="Flavocytochrome C3, Chain A"/>
    <property type="match status" value="1"/>
</dbReference>
<dbReference type="InterPro" id="IPR023155">
    <property type="entry name" value="Cyt_c-552/4"/>
</dbReference>
<dbReference type="InterPro" id="IPR036280">
    <property type="entry name" value="Multihaem_cyt_sf"/>
</dbReference>
<dbReference type="InterPro" id="IPR051829">
    <property type="entry name" value="Multiheme_Cytochr_ET"/>
</dbReference>
<dbReference type="PANTHER" id="PTHR35038:SF8">
    <property type="entry name" value="C-TYPE POLYHEME CYTOCHROME OMCC"/>
    <property type="match status" value="1"/>
</dbReference>
<dbReference type="PANTHER" id="PTHR35038">
    <property type="entry name" value="DISSIMILATORY SULFITE REDUCTASE SIRA"/>
    <property type="match status" value="1"/>
</dbReference>
<dbReference type="Pfam" id="PF13435">
    <property type="entry name" value="Cytochrome_C554"/>
    <property type="match status" value="1"/>
</dbReference>
<dbReference type="SUPFAM" id="SSF48695">
    <property type="entry name" value="Multiheme cytochromes"/>
    <property type="match status" value="2"/>
</dbReference>
<dbReference type="PROSITE" id="PS51008">
    <property type="entry name" value="MULTIHEME_CYTC"/>
    <property type="match status" value="1"/>
</dbReference>
<dbReference type="PROSITE" id="PS51257">
    <property type="entry name" value="PROKAR_LIPOPROTEIN"/>
    <property type="match status" value="1"/>
</dbReference>
<dbReference type="PROSITE" id="PS00108">
    <property type="entry name" value="PROTEIN_KINASE_ST"/>
    <property type="match status" value="1"/>
</dbReference>
<name>CYCC_GEOSL</name>
<evidence type="ECO:0000255" key="1"/>
<evidence type="ECO:0000255" key="2">
    <source>
        <dbReference type="PROSITE-ProRule" id="PRU00303"/>
    </source>
</evidence>
<evidence type="ECO:0000269" key="3">
    <source>
    </source>
</evidence>
<evidence type="ECO:0000269" key="4">
    <source>
    </source>
</evidence>
<evidence type="ECO:0000305" key="5"/>
<evidence type="ECO:0000305" key="6">
    <source>
    </source>
</evidence>
<reference key="1">
    <citation type="journal article" date="2003" name="Science">
        <title>Genome of Geobacter sulfurreducens: metal reduction in subsurface environments.</title>
        <authorList>
            <person name="Methe B.A."/>
            <person name="Nelson K.E."/>
            <person name="Eisen J.A."/>
            <person name="Paulsen I.T."/>
            <person name="Nelson W.C."/>
            <person name="Heidelberg J.F."/>
            <person name="Wu D."/>
            <person name="Wu M."/>
            <person name="Ward N.L."/>
            <person name="Beanan M.J."/>
            <person name="Dodson R.J."/>
            <person name="Madupu R."/>
            <person name="Brinkac L.M."/>
            <person name="Daugherty S.C."/>
            <person name="DeBoy R.T."/>
            <person name="Durkin A.S."/>
            <person name="Gwinn M.L."/>
            <person name="Kolonay J.F."/>
            <person name="Sullivan S.A."/>
            <person name="Haft D.H."/>
            <person name="Selengut J."/>
            <person name="Davidsen T.M."/>
            <person name="Zafar N."/>
            <person name="White O."/>
            <person name="Tran B."/>
            <person name="Romero C."/>
            <person name="Forberger H.A."/>
            <person name="Weidman J.F."/>
            <person name="Khouri H.M."/>
            <person name="Feldblyum T.V."/>
            <person name="Utterback T.R."/>
            <person name="Van Aken S.E."/>
            <person name="Lovley D.R."/>
            <person name="Fraser C.M."/>
        </authorList>
    </citation>
    <scope>NUCLEOTIDE SEQUENCE [LARGE SCALE GENOMIC DNA]</scope>
    <source>
        <strain>ATCC 51573 / DSM 12127 / PCA</strain>
    </source>
</reference>
<reference key="2">
    <citation type="journal article" date="2001" name="Biochem. J.">
        <title>Isolation, characterization and gene sequence analysis of a membrane-associated 89 kDa Fe(III) reducing cytochrome c from Geobacter sulfurreducens.</title>
        <authorList>
            <person name="Magnuson T.S."/>
            <person name="Isoyama N."/>
            <person name="Hodges-Myerson A.L."/>
            <person name="Davidson G."/>
            <person name="Maroney M.J."/>
            <person name="Geesey G.G."/>
            <person name="Lovley D.R."/>
        </authorList>
    </citation>
    <scope>NUCLEOTIDE SEQUENCE [GENOMIC DNA] OF 1-459</scope>
    <scope>PROTEIN SEQUENCE OF 275-281 AND 341-348</scope>
    <scope>SUBCELLULAR LOCATION</scope>
    <source>
        <strain>ATCC 51573 / DSM 12127 / PCA</strain>
    </source>
</reference>
<reference key="3">
    <citation type="journal article" date="2003" name="J. Bacteriol.">
        <title>OmcB, a c-type polyheme cytochrome, involved in Fe(III) reduction in Geobacter sulfurreducens.</title>
        <authorList>
            <person name="Leang C."/>
            <person name="Coppi M.V."/>
            <person name="Lovley D.R."/>
        </authorList>
    </citation>
    <scope>FUNCTION</scope>
    <source>
        <strain>DL-1 / KN400</strain>
    </source>
</reference>
<reference key="4">
    <citation type="journal article" date="2004" name="Appl. Environ. Microbiol.">
        <title>Direct correlation between rates of anaerobic respiration and levels of mRNA for key respiratory genes in Geobacter sulfurreducens.</title>
        <authorList>
            <person name="Chin K.J."/>
            <person name="Esteve-Nunez A."/>
            <person name="Leang C."/>
            <person name="Lovley D.R."/>
        </authorList>
    </citation>
    <scope>INDUCTION</scope>
    <source>
        <strain>ATCC 51573 / DSM 12127 / PCA</strain>
    </source>
</reference>
<proteinExistence type="evidence at protein level"/>
<feature type="signal peptide" evidence="2">
    <location>
        <begin position="1"/>
        <end position="23"/>
    </location>
</feature>
<feature type="chain" id="PRO_0000429037" description="C-type polyheme cytochrome OmcC">
    <location>
        <begin position="24"/>
        <end position="768"/>
    </location>
</feature>
<feature type="binding site" description="covalent" evidence="1">
    <location>
        <position position="48"/>
    </location>
    <ligand>
        <name>heme c</name>
        <dbReference type="ChEBI" id="CHEBI:61717"/>
        <label>1</label>
    </ligand>
</feature>
<feature type="binding site" description="covalent" evidence="1">
    <location>
        <position position="51"/>
    </location>
    <ligand>
        <name>heme c</name>
        <dbReference type="ChEBI" id="CHEBI:61717"/>
        <label>1</label>
    </ligand>
</feature>
<feature type="binding site" description="axial binding residue" evidence="1">
    <location>
        <position position="52"/>
    </location>
    <ligand>
        <name>heme c</name>
        <dbReference type="ChEBI" id="CHEBI:61717"/>
        <label>1</label>
    </ligand>
    <ligandPart>
        <name>Fe</name>
        <dbReference type="ChEBI" id="CHEBI:18248"/>
    </ligandPart>
</feature>
<feature type="binding site" description="covalent" evidence="1">
    <location>
        <position position="80"/>
    </location>
    <ligand>
        <name>heme c</name>
        <dbReference type="ChEBI" id="CHEBI:61717"/>
        <label>2</label>
    </ligand>
</feature>
<feature type="binding site" description="covalent" evidence="1">
    <location>
        <position position="83"/>
    </location>
    <ligand>
        <name>heme c</name>
        <dbReference type="ChEBI" id="CHEBI:61717"/>
        <label>2</label>
    </ligand>
</feature>
<feature type="binding site" description="axial binding residue" evidence="1">
    <location>
        <position position="84"/>
    </location>
    <ligand>
        <name>heme c</name>
        <dbReference type="ChEBI" id="CHEBI:61717"/>
        <label>2</label>
    </ligand>
    <ligandPart>
        <name>Fe</name>
        <dbReference type="ChEBI" id="CHEBI:18248"/>
    </ligandPart>
</feature>
<feature type="binding site" description="covalent" evidence="1">
    <location>
        <position position="112"/>
    </location>
    <ligand>
        <name>heme c</name>
        <dbReference type="ChEBI" id="CHEBI:61717"/>
        <label>3</label>
    </ligand>
</feature>
<feature type="binding site" description="covalent" evidence="1">
    <location>
        <position position="115"/>
    </location>
    <ligand>
        <name>heme c</name>
        <dbReference type="ChEBI" id="CHEBI:61717"/>
        <label>3</label>
    </ligand>
</feature>
<feature type="binding site" description="axial binding residue" evidence="1">
    <location>
        <position position="116"/>
    </location>
    <ligand>
        <name>heme c</name>
        <dbReference type="ChEBI" id="CHEBI:61717"/>
        <label>3</label>
    </ligand>
    <ligandPart>
        <name>Fe</name>
        <dbReference type="ChEBI" id="CHEBI:18248"/>
    </ligandPart>
</feature>
<feature type="binding site" description="covalent" evidence="1">
    <location>
        <position position="148"/>
    </location>
    <ligand>
        <name>heme c</name>
        <dbReference type="ChEBI" id="CHEBI:61717"/>
        <label>4</label>
    </ligand>
</feature>
<feature type="binding site" description="covalent" evidence="1">
    <location>
        <position position="151"/>
    </location>
    <ligand>
        <name>heme c</name>
        <dbReference type="ChEBI" id="CHEBI:61717"/>
        <label>4</label>
    </ligand>
</feature>
<feature type="binding site" description="axial binding residue" evidence="1">
    <location>
        <position position="152"/>
    </location>
    <ligand>
        <name>heme c</name>
        <dbReference type="ChEBI" id="CHEBI:61717"/>
        <label>4</label>
    </ligand>
    <ligandPart>
        <name>Fe</name>
        <dbReference type="ChEBI" id="CHEBI:18248"/>
    </ligandPart>
</feature>
<feature type="binding site" description="covalent" evidence="1">
    <location>
        <position position="193"/>
    </location>
    <ligand>
        <name>heme c</name>
        <dbReference type="ChEBI" id="CHEBI:61717"/>
        <label>5</label>
    </ligand>
</feature>
<feature type="binding site" description="covalent" evidence="1">
    <location>
        <position position="196"/>
    </location>
    <ligand>
        <name>heme c</name>
        <dbReference type="ChEBI" id="CHEBI:61717"/>
        <label>5</label>
    </ligand>
</feature>
<feature type="binding site" description="axial binding residue" evidence="1">
    <location>
        <position position="197"/>
    </location>
    <ligand>
        <name>heme c</name>
        <dbReference type="ChEBI" id="CHEBI:61717"/>
        <label>5</label>
    </ligand>
    <ligandPart>
        <name>Fe</name>
        <dbReference type="ChEBI" id="CHEBI:18248"/>
    </ligandPart>
</feature>
<feature type="binding site" description="covalent" evidence="1">
    <location>
        <position position="238"/>
    </location>
    <ligand>
        <name>heme c</name>
        <dbReference type="ChEBI" id="CHEBI:61717"/>
        <label>6</label>
    </ligand>
</feature>
<feature type="binding site" description="covalent" evidence="1">
    <location>
        <position position="241"/>
    </location>
    <ligand>
        <name>heme c</name>
        <dbReference type="ChEBI" id="CHEBI:61717"/>
        <label>6</label>
    </ligand>
</feature>
<feature type="binding site" description="axial binding residue" evidence="1">
    <location>
        <position position="242"/>
    </location>
    <ligand>
        <name>heme c</name>
        <dbReference type="ChEBI" id="CHEBI:61717"/>
        <label>6</label>
    </ligand>
    <ligandPart>
        <name>Fe</name>
        <dbReference type="ChEBI" id="CHEBI:18248"/>
    </ligandPart>
</feature>
<feature type="binding site" description="covalent" evidence="1">
    <location>
        <position position="320"/>
    </location>
    <ligand>
        <name>heme c</name>
        <dbReference type="ChEBI" id="CHEBI:61717"/>
        <label>7</label>
    </ligand>
</feature>
<feature type="binding site" description="covalent" evidence="1">
    <location>
        <position position="323"/>
    </location>
    <ligand>
        <name>heme c</name>
        <dbReference type="ChEBI" id="CHEBI:61717"/>
        <label>7</label>
    </ligand>
</feature>
<feature type="binding site" description="axial binding residue" evidence="1">
    <location>
        <position position="324"/>
    </location>
    <ligand>
        <name>heme c</name>
        <dbReference type="ChEBI" id="CHEBI:61717"/>
        <label>7</label>
    </ligand>
    <ligandPart>
        <name>Fe</name>
        <dbReference type="ChEBI" id="CHEBI:18248"/>
    </ligandPart>
</feature>
<feature type="binding site" description="covalent" evidence="1">
    <location>
        <position position="405"/>
    </location>
    <ligand>
        <name>heme c</name>
        <dbReference type="ChEBI" id="CHEBI:61717"/>
        <label>8</label>
    </ligand>
</feature>
<feature type="binding site" description="covalent" evidence="1">
    <location>
        <position position="408"/>
    </location>
    <ligand>
        <name>heme c</name>
        <dbReference type="ChEBI" id="CHEBI:61717"/>
        <label>8</label>
    </ligand>
</feature>
<feature type="binding site" description="axial binding residue" evidence="1">
    <location>
        <position position="409"/>
    </location>
    <ligand>
        <name>heme c</name>
        <dbReference type="ChEBI" id="CHEBI:61717"/>
        <label>8</label>
    </ligand>
    <ligandPart>
        <name>Fe</name>
        <dbReference type="ChEBI" id="CHEBI:18248"/>
    </ligandPart>
</feature>
<feature type="binding site" description="covalent" evidence="1">
    <location>
        <position position="454"/>
    </location>
    <ligand>
        <name>heme c</name>
        <dbReference type="ChEBI" id="CHEBI:61717"/>
        <label>9</label>
    </ligand>
</feature>
<feature type="binding site" description="covalent" evidence="1">
    <location>
        <position position="457"/>
    </location>
    <ligand>
        <name>heme c</name>
        <dbReference type="ChEBI" id="CHEBI:61717"/>
        <label>9</label>
    </ligand>
</feature>
<feature type="binding site" description="axial binding residue" evidence="1">
    <location>
        <position position="458"/>
    </location>
    <ligand>
        <name>heme c</name>
        <dbReference type="ChEBI" id="CHEBI:61717"/>
        <label>9</label>
    </ligand>
    <ligandPart>
        <name>Fe</name>
        <dbReference type="ChEBI" id="CHEBI:18248"/>
    </ligandPart>
</feature>
<feature type="binding site" description="covalent" evidence="1">
    <location>
        <position position="504"/>
    </location>
    <ligand>
        <name>heme c</name>
        <dbReference type="ChEBI" id="CHEBI:61717"/>
        <label>10</label>
    </ligand>
</feature>
<feature type="binding site" description="covalent" evidence="1">
    <location>
        <position position="507"/>
    </location>
    <ligand>
        <name>heme c</name>
        <dbReference type="ChEBI" id="CHEBI:61717"/>
        <label>10</label>
    </ligand>
</feature>
<feature type="binding site" description="axial binding residue" evidence="1">
    <location>
        <position position="508"/>
    </location>
    <ligand>
        <name>heme c</name>
        <dbReference type="ChEBI" id="CHEBI:61717"/>
        <label>10</label>
    </ligand>
    <ligandPart>
        <name>Fe</name>
        <dbReference type="ChEBI" id="CHEBI:18248"/>
    </ligandPart>
</feature>
<feature type="binding site" description="covalent" evidence="1">
    <location>
        <position position="579"/>
    </location>
    <ligand>
        <name>heme c</name>
        <dbReference type="ChEBI" id="CHEBI:61717"/>
        <label>11</label>
    </ligand>
</feature>
<feature type="binding site" description="covalent" evidence="1">
    <location>
        <position position="582"/>
    </location>
    <ligand>
        <name>heme c</name>
        <dbReference type="ChEBI" id="CHEBI:61717"/>
        <label>11</label>
    </ligand>
</feature>
<feature type="binding site" description="axial binding residue" evidence="1">
    <location>
        <position position="583"/>
    </location>
    <ligand>
        <name>heme c</name>
        <dbReference type="ChEBI" id="CHEBI:61717"/>
        <label>11</label>
    </ligand>
    <ligandPart>
        <name>Fe</name>
        <dbReference type="ChEBI" id="CHEBI:18248"/>
    </ligandPart>
</feature>
<feature type="binding site" description="covalent" evidence="1">
    <location>
        <position position="611"/>
    </location>
    <ligand>
        <name>heme c</name>
        <dbReference type="ChEBI" id="CHEBI:61717"/>
        <label>12</label>
    </ligand>
</feature>
<feature type="binding site" description="covalent" evidence="1">
    <location>
        <position position="614"/>
    </location>
    <ligand>
        <name>heme c</name>
        <dbReference type="ChEBI" id="CHEBI:61717"/>
        <label>12</label>
    </ligand>
</feature>
<feature type="binding site" description="axial binding residue" evidence="1">
    <location>
        <position position="615"/>
    </location>
    <ligand>
        <name>heme c</name>
        <dbReference type="ChEBI" id="CHEBI:61717"/>
        <label>12</label>
    </ligand>
    <ligandPart>
        <name>Fe</name>
        <dbReference type="ChEBI" id="CHEBI:18248"/>
    </ligandPart>
</feature>
<feature type="lipid moiety-binding region" description="N-palmitoyl cysteine" evidence="2">
    <location>
        <position position="24"/>
    </location>
</feature>
<feature type="lipid moiety-binding region" description="S-diacylglycerol cysteine" evidence="2">
    <location>
        <position position="24"/>
    </location>
</feature>
<accession>Q749L1</accession>
<accession>Q93M26</accession>